<gene>
    <name evidence="1" type="primary">argG</name>
    <name type="ordered locus">LPC_2852</name>
</gene>
<accession>A5IHA3</accession>
<protein>
    <recommendedName>
        <fullName evidence="1">Argininosuccinate synthase</fullName>
        <ecNumber evidence="1">6.3.4.5</ecNumber>
    </recommendedName>
    <alternativeName>
        <fullName evidence="1">Citrulline--aspartate ligase</fullName>
    </alternativeName>
</protein>
<keyword id="KW-0028">Amino-acid biosynthesis</keyword>
<keyword id="KW-0055">Arginine biosynthesis</keyword>
<keyword id="KW-0067">ATP-binding</keyword>
<keyword id="KW-0963">Cytoplasm</keyword>
<keyword id="KW-0436">Ligase</keyword>
<keyword id="KW-0547">Nucleotide-binding</keyword>
<sequence>MKKVIKKIALAYSGGLDTSIMIPWLKEHYEHAEVIAVICDLGQQEDLDTIKNKALKSGASKAYVVDVKNEFAIQYLWPLVKSGALYEDQYILGTISRPLIAQKLVEIALTEQVNAVAHGATGKGNDQVRFEYSIKALAPQLEIIAPWRTWDIKSRQEAIVYAKAHGIEVPVTPKAPYSRDHNIWYISHEGGVLEDPSQEMPDDVLLMTAPVSQTPDEEEVVVLDFKKGVPVALNGQELSPVDLLNSLNQKAGQHGIGVADIVENRLVGMKIRGIYEAPAAAVLYKAHKLLESLCLTRSTLHLKQSLQQTYANLVYEGRWFSQTKQALDAFIDVTQQHVTGCVKLKLFKGNIIPAGMHSPYSLHHPELATFEEDNVYNQKDAEGFINLFSLSAKIYSQVHQEGNYD</sequence>
<feature type="chain" id="PRO_1000000401" description="Argininosuccinate synthase">
    <location>
        <begin position="1"/>
        <end position="405"/>
    </location>
</feature>
<feature type="binding site" evidence="1">
    <location>
        <begin position="11"/>
        <end position="19"/>
    </location>
    <ligand>
        <name>ATP</name>
        <dbReference type="ChEBI" id="CHEBI:30616"/>
    </ligand>
</feature>
<feature type="binding site" evidence="1">
    <location>
        <position position="90"/>
    </location>
    <ligand>
        <name>L-citrulline</name>
        <dbReference type="ChEBI" id="CHEBI:57743"/>
    </ligand>
</feature>
<feature type="binding site" evidence="1">
    <location>
        <position position="119"/>
    </location>
    <ligand>
        <name>ATP</name>
        <dbReference type="ChEBI" id="CHEBI:30616"/>
    </ligand>
</feature>
<feature type="binding site" evidence="1">
    <location>
        <position position="121"/>
    </location>
    <ligand>
        <name>L-aspartate</name>
        <dbReference type="ChEBI" id="CHEBI:29991"/>
    </ligand>
</feature>
<feature type="binding site" evidence="1">
    <location>
        <position position="125"/>
    </location>
    <ligand>
        <name>L-aspartate</name>
        <dbReference type="ChEBI" id="CHEBI:29991"/>
    </ligand>
</feature>
<feature type="binding site" evidence="1">
    <location>
        <position position="125"/>
    </location>
    <ligand>
        <name>L-citrulline</name>
        <dbReference type="ChEBI" id="CHEBI:57743"/>
    </ligand>
</feature>
<feature type="binding site" evidence="1">
    <location>
        <position position="126"/>
    </location>
    <ligand>
        <name>L-aspartate</name>
        <dbReference type="ChEBI" id="CHEBI:29991"/>
    </ligand>
</feature>
<feature type="binding site" evidence="1">
    <location>
        <position position="129"/>
    </location>
    <ligand>
        <name>L-citrulline</name>
        <dbReference type="ChEBI" id="CHEBI:57743"/>
    </ligand>
</feature>
<feature type="binding site" evidence="1">
    <location>
        <position position="178"/>
    </location>
    <ligand>
        <name>L-citrulline</name>
        <dbReference type="ChEBI" id="CHEBI:57743"/>
    </ligand>
</feature>
<feature type="binding site" evidence="1">
    <location>
        <position position="187"/>
    </location>
    <ligand>
        <name>L-citrulline</name>
        <dbReference type="ChEBI" id="CHEBI:57743"/>
    </ligand>
</feature>
<feature type="binding site" evidence="1">
    <location>
        <position position="263"/>
    </location>
    <ligand>
        <name>L-citrulline</name>
        <dbReference type="ChEBI" id="CHEBI:57743"/>
    </ligand>
</feature>
<feature type="binding site" evidence="1">
    <location>
        <position position="275"/>
    </location>
    <ligand>
        <name>L-citrulline</name>
        <dbReference type="ChEBI" id="CHEBI:57743"/>
    </ligand>
</feature>
<dbReference type="EC" id="6.3.4.5" evidence="1"/>
<dbReference type="EMBL" id="CP000675">
    <property type="protein sequence ID" value="ABQ56753.1"/>
    <property type="molecule type" value="Genomic_DNA"/>
</dbReference>
<dbReference type="RefSeq" id="WP_011945650.1">
    <property type="nucleotide sequence ID" value="NC_009494.2"/>
</dbReference>
<dbReference type="SMR" id="A5IHA3"/>
<dbReference type="KEGG" id="lpc:LPC_2852"/>
<dbReference type="HOGENOM" id="CLU_032784_4_2_6"/>
<dbReference type="UniPathway" id="UPA00068">
    <property type="reaction ID" value="UER00113"/>
</dbReference>
<dbReference type="GO" id="GO:0005737">
    <property type="term" value="C:cytoplasm"/>
    <property type="evidence" value="ECO:0007669"/>
    <property type="project" value="UniProtKB-SubCell"/>
</dbReference>
<dbReference type="GO" id="GO:0004055">
    <property type="term" value="F:argininosuccinate synthase activity"/>
    <property type="evidence" value="ECO:0007669"/>
    <property type="project" value="UniProtKB-UniRule"/>
</dbReference>
<dbReference type="GO" id="GO:0005524">
    <property type="term" value="F:ATP binding"/>
    <property type="evidence" value="ECO:0007669"/>
    <property type="project" value="UniProtKB-UniRule"/>
</dbReference>
<dbReference type="GO" id="GO:0000053">
    <property type="term" value="P:argininosuccinate metabolic process"/>
    <property type="evidence" value="ECO:0007669"/>
    <property type="project" value="TreeGrafter"/>
</dbReference>
<dbReference type="GO" id="GO:0006526">
    <property type="term" value="P:L-arginine biosynthetic process"/>
    <property type="evidence" value="ECO:0007669"/>
    <property type="project" value="UniProtKB-UniRule"/>
</dbReference>
<dbReference type="GO" id="GO:0000050">
    <property type="term" value="P:urea cycle"/>
    <property type="evidence" value="ECO:0007669"/>
    <property type="project" value="TreeGrafter"/>
</dbReference>
<dbReference type="CDD" id="cd01999">
    <property type="entry name" value="ASS"/>
    <property type="match status" value="1"/>
</dbReference>
<dbReference type="FunFam" id="3.40.50.620:FF:000019">
    <property type="entry name" value="Argininosuccinate synthase"/>
    <property type="match status" value="1"/>
</dbReference>
<dbReference type="FunFam" id="3.90.1260.10:FF:000007">
    <property type="entry name" value="Argininosuccinate synthase"/>
    <property type="match status" value="1"/>
</dbReference>
<dbReference type="Gene3D" id="3.90.1260.10">
    <property type="entry name" value="Argininosuccinate synthetase, chain A, domain 2"/>
    <property type="match status" value="1"/>
</dbReference>
<dbReference type="Gene3D" id="3.40.50.620">
    <property type="entry name" value="HUPs"/>
    <property type="match status" value="1"/>
</dbReference>
<dbReference type="Gene3D" id="1.20.5.470">
    <property type="entry name" value="Single helix bin"/>
    <property type="match status" value="1"/>
</dbReference>
<dbReference type="HAMAP" id="MF_00005">
    <property type="entry name" value="Arg_succ_synth_type1"/>
    <property type="match status" value="1"/>
</dbReference>
<dbReference type="InterPro" id="IPR048268">
    <property type="entry name" value="Arginosuc_syn_C"/>
</dbReference>
<dbReference type="InterPro" id="IPR048267">
    <property type="entry name" value="Arginosuc_syn_N"/>
</dbReference>
<dbReference type="InterPro" id="IPR001518">
    <property type="entry name" value="Arginosuc_synth"/>
</dbReference>
<dbReference type="InterPro" id="IPR018223">
    <property type="entry name" value="Arginosuc_synth_CS"/>
</dbReference>
<dbReference type="InterPro" id="IPR023434">
    <property type="entry name" value="Arginosuc_synth_type_1_subfam"/>
</dbReference>
<dbReference type="InterPro" id="IPR024074">
    <property type="entry name" value="AS_cat/multimer_dom_body"/>
</dbReference>
<dbReference type="InterPro" id="IPR014729">
    <property type="entry name" value="Rossmann-like_a/b/a_fold"/>
</dbReference>
<dbReference type="NCBIfam" id="TIGR00032">
    <property type="entry name" value="argG"/>
    <property type="match status" value="1"/>
</dbReference>
<dbReference type="NCBIfam" id="NF001770">
    <property type="entry name" value="PRK00509.1"/>
    <property type="match status" value="1"/>
</dbReference>
<dbReference type="PANTHER" id="PTHR11587">
    <property type="entry name" value="ARGININOSUCCINATE SYNTHASE"/>
    <property type="match status" value="1"/>
</dbReference>
<dbReference type="PANTHER" id="PTHR11587:SF2">
    <property type="entry name" value="ARGININOSUCCINATE SYNTHASE"/>
    <property type="match status" value="1"/>
</dbReference>
<dbReference type="Pfam" id="PF20979">
    <property type="entry name" value="Arginosuc_syn_C"/>
    <property type="match status" value="1"/>
</dbReference>
<dbReference type="Pfam" id="PF00764">
    <property type="entry name" value="Arginosuc_synth"/>
    <property type="match status" value="1"/>
</dbReference>
<dbReference type="SUPFAM" id="SSF52402">
    <property type="entry name" value="Adenine nucleotide alpha hydrolases-like"/>
    <property type="match status" value="1"/>
</dbReference>
<dbReference type="SUPFAM" id="SSF69864">
    <property type="entry name" value="Argininosuccinate synthetase, C-terminal domain"/>
    <property type="match status" value="1"/>
</dbReference>
<dbReference type="PROSITE" id="PS00564">
    <property type="entry name" value="ARGININOSUCCIN_SYN_1"/>
    <property type="match status" value="1"/>
</dbReference>
<dbReference type="PROSITE" id="PS00565">
    <property type="entry name" value="ARGININOSUCCIN_SYN_2"/>
    <property type="match status" value="1"/>
</dbReference>
<reference key="1">
    <citation type="submission" date="2006-11" db="EMBL/GenBank/DDBJ databases">
        <title>Identification and characterization of a new conjugation/ type IVA secretion system (trb/tra) of L. pneumophila Corby localized on a mobile genomic island.</title>
        <authorList>
            <person name="Gloeckner G."/>
            <person name="Albert-Weissenberger C."/>
            <person name="Weinmann E."/>
            <person name="Jacobi S."/>
            <person name="Schunder E."/>
            <person name="Steinert M."/>
            <person name="Buchrieser C."/>
            <person name="Hacker J."/>
            <person name="Heuner K."/>
        </authorList>
    </citation>
    <scope>NUCLEOTIDE SEQUENCE [LARGE SCALE GENOMIC DNA]</scope>
    <source>
        <strain>Corby</strain>
    </source>
</reference>
<proteinExistence type="inferred from homology"/>
<evidence type="ECO:0000255" key="1">
    <source>
        <dbReference type="HAMAP-Rule" id="MF_00005"/>
    </source>
</evidence>
<organism>
    <name type="scientific">Legionella pneumophila (strain Corby)</name>
    <dbReference type="NCBI Taxonomy" id="400673"/>
    <lineage>
        <taxon>Bacteria</taxon>
        <taxon>Pseudomonadati</taxon>
        <taxon>Pseudomonadota</taxon>
        <taxon>Gammaproteobacteria</taxon>
        <taxon>Legionellales</taxon>
        <taxon>Legionellaceae</taxon>
        <taxon>Legionella</taxon>
    </lineage>
</organism>
<comment type="catalytic activity">
    <reaction evidence="1">
        <text>L-citrulline + L-aspartate + ATP = 2-(N(omega)-L-arginino)succinate + AMP + diphosphate + H(+)</text>
        <dbReference type="Rhea" id="RHEA:10932"/>
        <dbReference type="ChEBI" id="CHEBI:15378"/>
        <dbReference type="ChEBI" id="CHEBI:29991"/>
        <dbReference type="ChEBI" id="CHEBI:30616"/>
        <dbReference type="ChEBI" id="CHEBI:33019"/>
        <dbReference type="ChEBI" id="CHEBI:57472"/>
        <dbReference type="ChEBI" id="CHEBI:57743"/>
        <dbReference type="ChEBI" id="CHEBI:456215"/>
        <dbReference type="EC" id="6.3.4.5"/>
    </reaction>
</comment>
<comment type="pathway">
    <text evidence="1">Amino-acid biosynthesis; L-arginine biosynthesis; L-arginine from L-ornithine and carbamoyl phosphate: step 2/3.</text>
</comment>
<comment type="subunit">
    <text evidence="1">Homotetramer.</text>
</comment>
<comment type="subcellular location">
    <subcellularLocation>
        <location evidence="1">Cytoplasm</location>
    </subcellularLocation>
</comment>
<comment type="similarity">
    <text evidence="1">Belongs to the argininosuccinate synthase family. Type 1 subfamily.</text>
</comment>
<name>ASSY_LEGPC</name>